<protein>
    <recommendedName>
        <fullName>Gamma carbonic anhydrase 3, mitochondrial</fullName>
        <shortName>AtCA3</shortName>
        <shortName>GAMMA CA3</shortName>
        <ecNumber>4.2.1.-</ecNumber>
    </recommendedName>
</protein>
<evidence type="ECO:0000250" key="1"/>
<evidence type="ECO:0000255" key="2"/>
<evidence type="ECO:0000269" key="3">
    <source>
    </source>
</evidence>
<evidence type="ECO:0000269" key="4">
    <source>
    </source>
</evidence>
<evidence type="ECO:0000269" key="5">
    <source>
    </source>
</evidence>
<evidence type="ECO:0000305" key="6"/>
<comment type="function">
    <text evidence="1">Enzyme involved in the catabolism of H(2)CO(3) but that does not mediates the reversible hydration of carbon dioxide. Mediates complex I assembly in mitochondria and respiration (By similarity).</text>
</comment>
<comment type="cofactor">
    <cofactor evidence="1">
        <name>Zn(2+)</name>
        <dbReference type="ChEBI" id="CHEBI:29105"/>
    </cofactor>
</comment>
<comment type="subunit">
    <text evidence="3 6">Homotrimer (Probable). Component of the oxidoreductase respiratory chain complex I; element of the extra matrix-exposed domain, which is attached to the membrane arm of this complex.</text>
</comment>
<comment type="subcellular location">
    <subcellularLocation>
        <location evidence="4 5">Mitochondrion membrane</location>
        <topology evidence="4 5">Peripheral membrane protein</topology>
        <orientation evidence="4 5">Matrix side</orientation>
    </subcellularLocation>
    <text evidence="1">Probably integral to the membrane.</text>
</comment>
<comment type="alternative products">
    <event type="alternative splicing"/>
    <isoform>
        <id>Q94AU7-1</id>
        <name>1</name>
        <sequence type="displayed"/>
    </isoform>
    <isoform>
        <id>Q94AU7-2</id>
        <name>2</name>
        <sequence type="described" ref="VSP_043830"/>
    </isoform>
</comment>
<comment type="similarity">
    <text evidence="6">Belongs to the gamma-class carbonic anhydrase family.</text>
</comment>
<comment type="sequence caution" evidence="6">
    <conflict type="erroneous gene model prediction">
        <sequence resource="EMBL-CDS" id="BAB10927"/>
    </conflict>
</comment>
<dbReference type="EC" id="4.2.1.-"/>
<dbReference type="EMBL" id="AB013389">
    <property type="protein sequence ID" value="BAB10927.1"/>
    <property type="status" value="ALT_SEQ"/>
    <property type="molecule type" value="Genomic_DNA"/>
</dbReference>
<dbReference type="EMBL" id="CP002688">
    <property type="protein sequence ID" value="AED98222.1"/>
    <property type="molecule type" value="Genomic_DNA"/>
</dbReference>
<dbReference type="EMBL" id="CP002688">
    <property type="protein sequence ID" value="AED98223.1"/>
    <property type="molecule type" value="Genomic_DNA"/>
</dbReference>
<dbReference type="EMBL" id="AY045784">
    <property type="protein sequence ID" value="AAK76458.1"/>
    <property type="molecule type" value="mRNA"/>
</dbReference>
<dbReference type="EMBL" id="AY079385">
    <property type="protein sequence ID" value="AAL85116.1"/>
    <property type="molecule type" value="mRNA"/>
</dbReference>
<dbReference type="EMBL" id="AY087379">
    <property type="protein sequence ID" value="AAM64929.1"/>
    <property type="molecule type" value="mRNA"/>
</dbReference>
<dbReference type="RefSeq" id="NP_001078808.1">
    <molecule id="Q94AU7-2"/>
    <property type="nucleotide sequence ID" value="NM_001085339.1"/>
</dbReference>
<dbReference type="RefSeq" id="NP_569036.1">
    <molecule id="Q94AU7-1"/>
    <property type="nucleotide sequence ID" value="NM_126049.4"/>
</dbReference>
<dbReference type="SMR" id="Q94AU7"/>
<dbReference type="BioGRID" id="22025">
    <property type="interactions" value="1"/>
</dbReference>
<dbReference type="FunCoup" id="Q94AU7">
    <property type="interactions" value="715"/>
</dbReference>
<dbReference type="IntAct" id="Q94AU7">
    <property type="interactions" value="2"/>
</dbReference>
<dbReference type="STRING" id="3702.Q94AU7"/>
<dbReference type="PaxDb" id="3702-AT5G66510.2"/>
<dbReference type="ProteomicsDB" id="221886">
    <molecule id="Q94AU7-1"/>
</dbReference>
<dbReference type="EnsemblPlants" id="AT5G66510.1">
    <molecule id="Q94AU7-1"/>
    <property type="protein sequence ID" value="AT5G66510.1"/>
    <property type="gene ID" value="AT5G66510"/>
</dbReference>
<dbReference type="EnsemblPlants" id="AT5G66510.2">
    <molecule id="Q94AU7-2"/>
    <property type="protein sequence ID" value="AT5G66510.2"/>
    <property type="gene ID" value="AT5G66510"/>
</dbReference>
<dbReference type="GeneID" id="836783"/>
<dbReference type="Gramene" id="AT5G66510.1">
    <molecule id="Q94AU7-1"/>
    <property type="protein sequence ID" value="AT5G66510.1"/>
    <property type="gene ID" value="AT5G66510"/>
</dbReference>
<dbReference type="Gramene" id="AT5G66510.2">
    <molecule id="Q94AU7-2"/>
    <property type="protein sequence ID" value="AT5G66510.2"/>
    <property type="gene ID" value="AT5G66510"/>
</dbReference>
<dbReference type="KEGG" id="ath:AT5G66510"/>
<dbReference type="Araport" id="AT5G66510"/>
<dbReference type="TAIR" id="AT5G66510">
    <property type="gene designation" value="GAMMA CA3"/>
</dbReference>
<dbReference type="eggNOG" id="ENOG502QTES">
    <property type="taxonomic scope" value="Eukaryota"/>
</dbReference>
<dbReference type="HOGENOM" id="CLU_064827_0_0_1"/>
<dbReference type="InParanoid" id="Q94AU7"/>
<dbReference type="OMA" id="AHVRQNT"/>
<dbReference type="OrthoDB" id="25818at2759"/>
<dbReference type="PhylomeDB" id="Q94AU7"/>
<dbReference type="BioCyc" id="ARA:AT5G66510-MONOMER"/>
<dbReference type="BioCyc" id="MetaCyc:AT5G66510-MONOMER"/>
<dbReference type="PRO" id="PR:Q94AU7"/>
<dbReference type="Proteomes" id="UP000006548">
    <property type="component" value="Chromosome 5"/>
</dbReference>
<dbReference type="ExpressionAtlas" id="Q94AU7">
    <property type="expression patterns" value="baseline and differential"/>
</dbReference>
<dbReference type="GO" id="GO:0031966">
    <property type="term" value="C:mitochondrial membrane"/>
    <property type="evidence" value="ECO:0000314"/>
    <property type="project" value="TAIR"/>
</dbReference>
<dbReference type="GO" id="GO:0005739">
    <property type="term" value="C:mitochondrion"/>
    <property type="evidence" value="ECO:0000314"/>
    <property type="project" value="TAIR"/>
</dbReference>
<dbReference type="GO" id="GO:0009536">
    <property type="term" value="C:plastid"/>
    <property type="evidence" value="ECO:0007005"/>
    <property type="project" value="TAIR"/>
</dbReference>
<dbReference type="GO" id="GO:0045271">
    <property type="term" value="C:respiratory chain complex I"/>
    <property type="evidence" value="ECO:0000314"/>
    <property type="project" value="TAIR"/>
</dbReference>
<dbReference type="GO" id="GO:0004089">
    <property type="term" value="F:carbonate dehydratase activity"/>
    <property type="evidence" value="ECO:0000250"/>
    <property type="project" value="TAIR"/>
</dbReference>
<dbReference type="GO" id="GO:0046872">
    <property type="term" value="F:metal ion binding"/>
    <property type="evidence" value="ECO:0007669"/>
    <property type="project" value="UniProtKB-KW"/>
</dbReference>
<dbReference type="GO" id="GO:0009853">
    <property type="term" value="P:photorespiration"/>
    <property type="evidence" value="ECO:0000304"/>
    <property type="project" value="TAIR"/>
</dbReference>
<dbReference type="GO" id="GO:0070207">
    <property type="term" value="P:protein homotrimerization"/>
    <property type="evidence" value="ECO:0000250"/>
    <property type="project" value="UniProtKB"/>
</dbReference>
<dbReference type="CDD" id="cd04645">
    <property type="entry name" value="LbH_gamma_CA_like"/>
    <property type="match status" value="1"/>
</dbReference>
<dbReference type="Gene3D" id="2.160.10.10">
    <property type="entry name" value="Hexapeptide repeat proteins"/>
    <property type="match status" value="1"/>
</dbReference>
<dbReference type="InterPro" id="IPR001451">
    <property type="entry name" value="Hexapep"/>
</dbReference>
<dbReference type="InterPro" id="IPR047324">
    <property type="entry name" value="LbH_gamma_CA-like"/>
</dbReference>
<dbReference type="InterPro" id="IPR050484">
    <property type="entry name" value="Transf_Hexapept/Carb_Anhydrase"/>
</dbReference>
<dbReference type="InterPro" id="IPR011004">
    <property type="entry name" value="Trimer_LpxA-like_sf"/>
</dbReference>
<dbReference type="PANTHER" id="PTHR13061">
    <property type="entry name" value="DYNACTIN SUBUNIT P25"/>
    <property type="match status" value="1"/>
</dbReference>
<dbReference type="PANTHER" id="PTHR13061:SF62">
    <property type="entry name" value="GAMMA CARBONIC ANHYDRASE 3, MITOCHONDRIAL"/>
    <property type="match status" value="1"/>
</dbReference>
<dbReference type="Pfam" id="PF00132">
    <property type="entry name" value="Hexapep"/>
    <property type="match status" value="1"/>
</dbReference>
<dbReference type="SUPFAM" id="SSF51161">
    <property type="entry name" value="Trimeric LpxA-like enzymes"/>
    <property type="match status" value="1"/>
</dbReference>
<reference key="1">
    <citation type="journal article" date="1998" name="DNA Res.">
        <title>Structural analysis of Arabidopsis thaliana chromosome 5. VI. Sequence features of the regions of 1,367,185 bp covered by 19 physically assigned P1 and TAC clones.</title>
        <authorList>
            <person name="Kotani H."/>
            <person name="Nakamura Y."/>
            <person name="Sato S."/>
            <person name="Asamizu E."/>
            <person name="Kaneko T."/>
            <person name="Miyajima N."/>
            <person name="Tabata S."/>
        </authorList>
    </citation>
    <scope>NUCLEOTIDE SEQUENCE [LARGE SCALE GENOMIC DNA]</scope>
    <source>
        <strain>cv. Columbia</strain>
    </source>
</reference>
<reference key="2">
    <citation type="journal article" date="2017" name="Plant J.">
        <title>Araport11: a complete reannotation of the Arabidopsis thaliana reference genome.</title>
        <authorList>
            <person name="Cheng C.Y."/>
            <person name="Krishnakumar V."/>
            <person name="Chan A.P."/>
            <person name="Thibaud-Nissen F."/>
            <person name="Schobel S."/>
            <person name="Town C.D."/>
        </authorList>
    </citation>
    <scope>GENOME REANNOTATION</scope>
    <source>
        <strain>cv. Columbia</strain>
    </source>
</reference>
<reference key="3">
    <citation type="journal article" date="2003" name="Science">
        <title>Empirical analysis of transcriptional activity in the Arabidopsis genome.</title>
        <authorList>
            <person name="Yamada K."/>
            <person name="Lim J."/>
            <person name="Dale J.M."/>
            <person name="Chen H."/>
            <person name="Shinn P."/>
            <person name="Palm C.J."/>
            <person name="Southwick A.M."/>
            <person name="Wu H.C."/>
            <person name="Kim C.J."/>
            <person name="Nguyen M."/>
            <person name="Pham P.K."/>
            <person name="Cheuk R.F."/>
            <person name="Karlin-Newmann G."/>
            <person name="Liu S.X."/>
            <person name="Lam B."/>
            <person name="Sakano H."/>
            <person name="Wu T."/>
            <person name="Yu G."/>
            <person name="Miranda M."/>
            <person name="Quach H.L."/>
            <person name="Tripp M."/>
            <person name="Chang C.H."/>
            <person name="Lee J.M."/>
            <person name="Toriumi M.J."/>
            <person name="Chan M.M."/>
            <person name="Tang C.C."/>
            <person name="Onodera C.S."/>
            <person name="Deng J.M."/>
            <person name="Akiyama K."/>
            <person name="Ansari Y."/>
            <person name="Arakawa T."/>
            <person name="Banh J."/>
            <person name="Banno F."/>
            <person name="Bowser L."/>
            <person name="Brooks S.Y."/>
            <person name="Carninci P."/>
            <person name="Chao Q."/>
            <person name="Choy N."/>
            <person name="Enju A."/>
            <person name="Goldsmith A.D."/>
            <person name="Gurjal M."/>
            <person name="Hansen N.F."/>
            <person name="Hayashizaki Y."/>
            <person name="Johnson-Hopson C."/>
            <person name="Hsuan V.W."/>
            <person name="Iida K."/>
            <person name="Karnes M."/>
            <person name="Khan S."/>
            <person name="Koesema E."/>
            <person name="Ishida J."/>
            <person name="Jiang P.X."/>
            <person name="Jones T."/>
            <person name="Kawai J."/>
            <person name="Kamiya A."/>
            <person name="Meyers C."/>
            <person name="Nakajima M."/>
            <person name="Narusaka M."/>
            <person name="Seki M."/>
            <person name="Sakurai T."/>
            <person name="Satou M."/>
            <person name="Tamse R."/>
            <person name="Vaysberg M."/>
            <person name="Wallender E.K."/>
            <person name="Wong C."/>
            <person name="Yamamura Y."/>
            <person name="Yuan S."/>
            <person name="Shinozaki K."/>
            <person name="Davis R.W."/>
            <person name="Theologis A."/>
            <person name="Ecker J.R."/>
        </authorList>
    </citation>
    <scope>NUCLEOTIDE SEQUENCE [LARGE SCALE MRNA] (ISOFORM 1)</scope>
    <source>
        <strain>cv. Columbia</strain>
    </source>
</reference>
<reference key="4">
    <citation type="submission" date="2002-03" db="EMBL/GenBank/DDBJ databases">
        <title>Full-length cDNA from Arabidopsis thaliana.</title>
        <authorList>
            <person name="Brover V.V."/>
            <person name="Troukhan M.E."/>
            <person name="Alexandrov N.A."/>
            <person name="Lu Y.-P."/>
            <person name="Flavell R.B."/>
            <person name="Feldmann K.A."/>
        </authorList>
    </citation>
    <scope>NUCLEOTIDE SEQUENCE [LARGE SCALE MRNA] (ISOFORM 1)</scope>
</reference>
<reference key="5">
    <citation type="journal article" date="2003" name="Biochim. Biophys. Acta">
        <title>Mitochondrial complex I from Arabidopsis and rice: orthologs of mammalian and fungal components coupled with plant-specific subunits.</title>
        <authorList>
            <person name="Heazlewood J.L."/>
            <person name="Howell K.A."/>
            <person name="Millar A.H."/>
        </authorList>
    </citation>
    <scope>SUBUNIT</scope>
    <scope>IDENTIFICATION BY MASS SPECTROMETRY</scope>
    <scope>GENE FAMILY</scope>
    <source>
        <strain>cv. Landsberg erecta</strain>
    </source>
</reference>
<reference key="6">
    <citation type="journal article" date="2004" name="Plant Cell">
        <title>Experimental analysis of the Arabidopsis mitochondrial proteome highlights signaling and regulatory components, provides assessment of targeting prediction programs, and indicates plant-specific mitochondrial proteins.</title>
        <authorList>
            <person name="Heazlewood J.L."/>
            <person name="Tonti-Filippini J.S."/>
            <person name="Gout A.M."/>
            <person name="Day D.A."/>
            <person name="Whelan J."/>
            <person name="Millar A.H."/>
        </authorList>
    </citation>
    <scope>IDENTIFICATION BY MASS SPECTROMETRY</scope>
    <scope>SUBCELLULAR LOCATION [LARGE SCALE ANALYSIS]</scope>
    <source>
        <strain>cv. Landsberg erecta</strain>
    </source>
</reference>
<reference key="7">
    <citation type="journal article" date="2004" name="Plant Mol. Biol.">
        <title>Gamma carbonic anhydrases in plant mitochondria.</title>
        <authorList>
            <person name="Parisi G."/>
            <person name="Perales M."/>
            <person name="Fornasari M.S."/>
            <person name="Colaneri A."/>
            <person name="Gonzalez-Schain N."/>
            <person name="Gomez-Casati D."/>
            <person name="Zimmermann S."/>
            <person name="Brennicke A."/>
            <person name="Araya A."/>
            <person name="Ferry J.G."/>
            <person name="Echave J."/>
            <person name="Zabaleta E."/>
        </authorList>
    </citation>
    <scope>SUBCELLULAR LOCATION</scope>
    <scope>GENE FAMILY</scope>
    <scope>NOMENCLATURE</scope>
</reference>
<reference key="8">
    <citation type="journal article" date="2006" name="J. Biol. Chem.">
        <title>Carbonic anhydrase subunits form a matrix-exposed domain attached to the membrane arm of mitochondrial complex I in plants.</title>
        <authorList>
            <person name="Sunderhaus S."/>
            <person name="Dudkina N.V."/>
            <person name="Jaensch L."/>
            <person name="Klodmann J."/>
            <person name="Heinemeyer J."/>
            <person name="Perales M."/>
            <person name="Zabaleta E."/>
            <person name="Boekema E.J."/>
            <person name="Braun H.-P."/>
        </authorList>
    </citation>
    <scope>IDENTIFICATION BY MASS SPECTROMETRY</scope>
</reference>
<keyword id="KW-0025">Alternative splicing</keyword>
<keyword id="KW-0456">Lyase</keyword>
<keyword id="KW-0472">Membrane</keyword>
<keyword id="KW-0479">Metal-binding</keyword>
<keyword id="KW-0496">Mitochondrion</keyword>
<keyword id="KW-1185">Reference proteome</keyword>
<keyword id="KW-0809">Transit peptide</keyword>
<keyword id="KW-0862">Zinc</keyword>
<organism>
    <name type="scientific">Arabidopsis thaliana</name>
    <name type="common">Mouse-ear cress</name>
    <dbReference type="NCBI Taxonomy" id="3702"/>
    <lineage>
        <taxon>Eukaryota</taxon>
        <taxon>Viridiplantae</taxon>
        <taxon>Streptophyta</taxon>
        <taxon>Embryophyta</taxon>
        <taxon>Tracheophyta</taxon>
        <taxon>Spermatophyta</taxon>
        <taxon>Magnoliopsida</taxon>
        <taxon>eudicotyledons</taxon>
        <taxon>Gunneridae</taxon>
        <taxon>Pentapetalae</taxon>
        <taxon>rosids</taxon>
        <taxon>malvids</taxon>
        <taxon>Brassicales</taxon>
        <taxon>Brassicaceae</taxon>
        <taxon>Camelineae</taxon>
        <taxon>Arabidopsis</taxon>
    </lineage>
</organism>
<sequence length="258" mass="27837">MGTMGKAFYSVGFWIRETGQALDRLGCRLQGKNHFREQLSRHRTLMNVFDKTPNVDKGAFVAPNASLSGDVHVGRGSSIWYGCVLRGDANSISVGAGTNIQDNALVHVAKTNLSGKVLPTVIGDNVTIGHSAVLHGCTVEDEAYIGTSATVLDGAHVEKHAMVASGALVRQNTRIPSGEVWGGNPAKFLRKVTEEERVFFSSSAVEYSNLAQAHATENAKNLDEAEFKKLLNKKNARDTEYDSVLDDLTLPENVPKAA</sequence>
<proteinExistence type="evidence at protein level"/>
<feature type="transit peptide" description="Mitochondrion" evidence="2">
    <location>
        <begin position="1"/>
        <end position="43"/>
    </location>
</feature>
<feature type="chain" id="PRO_0000417612" description="Gamma carbonic anhydrase 3, mitochondrial">
    <location>
        <begin position="44"/>
        <end position="258"/>
    </location>
</feature>
<feature type="binding site" evidence="1">
    <location>
        <begin position="86"/>
        <end position="88"/>
    </location>
    <ligand>
        <name>substrate</name>
    </ligand>
</feature>
<feature type="binding site" evidence="1">
    <location>
        <begin position="101"/>
        <end position="102"/>
    </location>
    <ligand>
        <name>substrate</name>
    </ligand>
</feature>
<feature type="binding site" evidence="1">
    <location>
        <position position="107"/>
    </location>
    <ligand>
        <name>Zn(2+)</name>
        <dbReference type="ChEBI" id="CHEBI:29105"/>
    </ligand>
</feature>
<feature type="binding site" evidence="1">
    <location>
        <position position="130"/>
    </location>
    <ligand>
        <name>Zn(2+)</name>
        <dbReference type="ChEBI" id="CHEBI:29105"/>
    </ligand>
</feature>
<feature type="binding site" evidence="1">
    <location>
        <position position="135"/>
    </location>
    <ligand>
        <name>Zn(2+)</name>
        <dbReference type="ChEBI" id="CHEBI:29105"/>
    </ligand>
</feature>
<feature type="binding site" evidence="1">
    <location>
        <position position="209"/>
    </location>
    <ligand>
        <name>substrate</name>
    </ligand>
</feature>
<feature type="splice variant" id="VSP_043830" description="In isoform 2." evidence="6">
    <original>R</original>
    <variation>RDIPFDLMTDSA</variation>
    <location>
        <position position="86"/>
    </location>
</feature>
<accession>Q94AU7</accession>
<accession>A8MRL3</accession>
<accession>Q9FJY8</accession>
<name>GCA3_ARATH</name>
<gene>
    <name type="primary">GAMMACA3</name>
    <name type="ordered locus">At5g66510</name>
    <name type="ORF">K1F13.17</name>
</gene>